<dbReference type="EMBL" id="AK133737">
    <property type="protein sequence ID" value="BAE21812.1"/>
    <property type="molecule type" value="mRNA"/>
</dbReference>
<dbReference type="CCDS" id="CCDS57551.1"/>
<dbReference type="RefSeq" id="NP_001153817.1">
    <property type="nucleotide sequence ID" value="NM_001160345.1"/>
</dbReference>
<dbReference type="SMR" id="Q3UZP4"/>
<dbReference type="BioGRID" id="217708">
    <property type="interactions" value="1"/>
</dbReference>
<dbReference type="FunCoup" id="Q3UZP4">
    <property type="interactions" value="346"/>
</dbReference>
<dbReference type="STRING" id="10090.ENSMUSP00000096014"/>
<dbReference type="iPTMnet" id="Q3UZP4"/>
<dbReference type="PhosphoSitePlus" id="Q3UZP4"/>
<dbReference type="SwissPalm" id="Q3UZP4"/>
<dbReference type="PaxDb" id="10090-ENSMUSP00000096014"/>
<dbReference type="PeptideAtlas" id="Q3UZP4"/>
<dbReference type="ProteomicsDB" id="254724"/>
<dbReference type="Antibodypedia" id="48732">
    <property type="antibodies" value="8 antibodies from 7 providers"/>
</dbReference>
<dbReference type="Ensembl" id="ENSMUST00000098414.5">
    <property type="protein sequence ID" value="ENSMUSP00000096014.4"/>
    <property type="gene ID" value="ENSMUSG00000074093.5"/>
</dbReference>
<dbReference type="GeneID" id="75744"/>
<dbReference type="KEGG" id="mmu:75744"/>
<dbReference type="UCSC" id="uc009hcn.2">
    <property type="organism name" value="mouse"/>
</dbReference>
<dbReference type="AGR" id="MGI:1922994"/>
<dbReference type="CTD" id="258010"/>
<dbReference type="MGI" id="MGI:1922994">
    <property type="gene designation" value="Svip"/>
</dbReference>
<dbReference type="VEuPathDB" id="HostDB:ENSMUSG00000074093"/>
<dbReference type="eggNOG" id="ENOG502S5MU">
    <property type="taxonomic scope" value="Eukaryota"/>
</dbReference>
<dbReference type="GeneTree" id="ENSGT00390000007067"/>
<dbReference type="HOGENOM" id="CLU_174267_1_0_1"/>
<dbReference type="InParanoid" id="Q3UZP4"/>
<dbReference type="OMA" id="GMCLPCF"/>
<dbReference type="Reactome" id="R-MMU-6798695">
    <property type="pathway name" value="Neutrophil degranulation"/>
</dbReference>
<dbReference type="BioGRID-ORCS" id="75744">
    <property type="hits" value="0 hits in 76 CRISPR screens"/>
</dbReference>
<dbReference type="ChiTaRS" id="Svip">
    <property type="organism name" value="mouse"/>
</dbReference>
<dbReference type="PRO" id="PR:Q3UZP4"/>
<dbReference type="Proteomes" id="UP000000589">
    <property type="component" value="Chromosome 7"/>
</dbReference>
<dbReference type="RNAct" id="Q3UZP4">
    <property type="molecule type" value="protein"/>
</dbReference>
<dbReference type="Bgee" id="ENSMUSG00000074093">
    <property type="expression patterns" value="Expressed in seminiferous tubule of testis and 218 other cell types or tissues"/>
</dbReference>
<dbReference type="ExpressionAtlas" id="Q3UZP4">
    <property type="expression patterns" value="baseline and differential"/>
</dbReference>
<dbReference type="GO" id="GO:0000139">
    <property type="term" value="C:Golgi membrane"/>
    <property type="evidence" value="ECO:0007669"/>
    <property type="project" value="UniProtKB-SubCell"/>
</dbReference>
<dbReference type="GO" id="GO:0005765">
    <property type="term" value="C:lysosomal membrane"/>
    <property type="evidence" value="ECO:0007669"/>
    <property type="project" value="UniProtKB-SubCell"/>
</dbReference>
<dbReference type="GO" id="GO:0005886">
    <property type="term" value="C:plasma membrane"/>
    <property type="evidence" value="ECO:0007669"/>
    <property type="project" value="UniProtKB-SubCell"/>
</dbReference>
<dbReference type="GO" id="GO:0030868">
    <property type="term" value="C:smooth endoplasmic reticulum membrane"/>
    <property type="evidence" value="ECO:0007669"/>
    <property type="project" value="UniProtKB-SubCell"/>
</dbReference>
<dbReference type="GO" id="GO:0051117">
    <property type="term" value="F:ATPase binding"/>
    <property type="evidence" value="ECO:0007669"/>
    <property type="project" value="Ensembl"/>
</dbReference>
<dbReference type="GO" id="GO:1904293">
    <property type="term" value="P:negative regulation of ERAD pathway"/>
    <property type="evidence" value="ECO:0007669"/>
    <property type="project" value="Ensembl"/>
</dbReference>
<dbReference type="GO" id="GO:0031333">
    <property type="term" value="P:negative regulation of protein-containing complex assembly"/>
    <property type="evidence" value="ECO:0007669"/>
    <property type="project" value="Ensembl"/>
</dbReference>
<dbReference type="GO" id="GO:1904153">
    <property type="term" value="P:negative regulation of retrograde protein transport, ER to cytosol"/>
    <property type="evidence" value="ECO:0007669"/>
    <property type="project" value="Ensembl"/>
</dbReference>
<dbReference type="GO" id="GO:0010508">
    <property type="term" value="P:positive regulation of autophagy"/>
    <property type="evidence" value="ECO:0007669"/>
    <property type="project" value="Ensembl"/>
</dbReference>
<dbReference type="InterPro" id="IPR031632">
    <property type="entry name" value="SVIP"/>
</dbReference>
<dbReference type="InterPro" id="IPR055366">
    <property type="entry name" value="SVIP_metazoa"/>
</dbReference>
<dbReference type="PANTHER" id="PTHR35269">
    <property type="entry name" value="SMALL VCP/P97-INTERACTING PROTEIN"/>
    <property type="match status" value="1"/>
</dbReference>
<dbReference type="PANTHER" id="PTHR35269:SF1">
    <property type="entry name" value="SMALL VCP_P97-INTERACTING PROTEIN"/>
    <property type="match status" value="1"/>
</dbReference>
<dbReference type="Pfam" id="PF15811">
    <property type="entry name" value="SVIP"/>
    <property type="match status" value="1"/>
</dbReference>
<comment type="function">
    <text evidence="2">Negative regulator of the ER-associated degradation pathway (ERAD) of misfolded proteins. It competes with AMFR/gp78 for binding VCP/p97, and inhibits AMFR/gp78-VCP/p97 complex formation that is required for degradation of ERAD substrates. Involved in the regulation of adrenal cortisol and dehydroepiandrosterone (DHEA) biosynthesis.</text>
</comment>
<comment type="subunit">
    <text evidence="2">Interacts (via VIM motif) with VCP/p97. Forms a complex with VCP/p97 and DERL1.</text>
</comment>
<comment type="subcellular location">
    <subcellularLocation>
        <location evidence="2">Membrane</location>
        <topology evidence="2">Lipid-anchor</topology>
    </subcellularLocation>
    <subcellularLocation>
        <location evidence="1">Smooth endoplasmic reticulum membrane</location>
        <topology evidence="1">Peripheral membrane protein</topology>
    </subcellularLocation>
    <subcellularLocation>
        <location evidence="1">Golgi apparatus membrane</location>
        <topology evidence="1">Peripheral membrane protein</topology>
    </subcellularLocation>
    <subcellularLocation>
        <location evidence="1">Cell membrane</location>
        <topology evidence="1">Peripheral membrane protein</topology>
    </subcellularLocation>
    <subcellularLocation>
        <location evidence="2">Lysosome membrane</location>
    </subcellularLocation>
</comment>
<comment type="tissue specificity">
    <text evidence="4">Highly expressed in the medulla spinalis, adrenal gland, cerebrum, cerebellum, and sciatic nerve.</text>
</comment>
<comment type="similarity">
    <text evidence="5">Belongs to the SVIP family.</text>
</comment>
<gene>
    <name type="primary">Svip</name>
</gene>
<keyword id="KW-1003">Cell membrane</keyword>
<keyword id="KW-0256">Endoplasmic reticulum</keyword>
<keyword id="KW-0333">Golgi apparatus</keyword>
<keyword id="KW-0449">Lipoprotein</keyword>
<keyword id="KW-0458">Lysosome</keyword>
<keyword id="KW-0472">Membrane</keyword>
<keyword id="KW-0519">Myristate</keyword>
<keyword id="KW-0564">Palmitate</keyword>
<keyword id="KW-0597">Phosphoprotein</keyword>
<keyword id="KW-1185">Reference proteome</keyword>
<accession>Q3UZP4</accession>
<feature type="initiator methionine" description="Removed" evidence="2">
    <location>
        <position position="1"/>
    </location>
</feature>
<feature type="chain" id="PRO_0000280799" description="Small VCP/p97-interacting protein">
    <location>
        <begin position="2"/>
        <end position="77"/>
    </location>
</feature>
<feature type="region of interest" description="Disordered" evidence="3">
    <location>
        <begin position="1"/>
        <end position="77"/>
    </location>
</feature>
<feature type="region of interest" description="VCP/p97-interacting motif (VIM)" evidence="2">
    <location>
        <begin position="21"/>
        <end position="33"/>
    </location>
</feature>
<feature type="compositionally biased region" description="Basic and acidic residues" evidence="3">
    <location>
        <begin position="18"/>
        <end position="37"/>
    </location>
</feature>
<feature type="modified residue" description="Phosphoserine" evidence="2">
    <location>
        <position position="46"/>
    </location>
</feature>
<feature type="lipid moiety-binding region" description="N-myristoyl glycine" evidence="2">
    <location>
        <position position="2"/>
    </location>
</feature>
<feature type="lipid moiety-binding region" description="S-palmitoyl cysteine" evidence="2">
    <location>
        <position position="4"/>
    </location>
</feature>
<feature type="lipid moiety-binding region" description="S-palmitoyl cysteine" evidence="2">
    <location>
        <position position="7"/>
    </location>
</feature>
<sequence length="77" mass="8364">MGLCFPCPAESAPPSPSPEEKREKLAEAAERRQKEAATRGILDIQSVEAKKKKKEQLEKQMATSGPPTAGGLRWTVS</sequence>
<organism>
    <name type="scientific">Mus musculus</name>
    <name type="common">Mouse</name>
    <dbReference type="NCBI Taxonomy" id="10090"/>
    <lineage>
        <taxon>Eukaryota</taxon>
        <taxon>Metazoa</taxon>
        <taxon>Chordata</taxon>
        <taxon>Craniata</taxon>
        <taxon>Vertebrata</taxon>
        <taxon>Euteleostomi</taxon>
        <taxon>Mammalia</taxon>
        <taxon>Eutheria</taxon>
        <taxon>Euarchontoglires</taxon>
        <taxon>Glires</taxon>
        <taxon>Rodentia</taxon>
        <taxon>Myomorpha</taxon>
        <taxon>Muroidea</taxon>
        <taxon>Muridae</taxon>
        <taxon>Murinae</taxon>
        <taxon>Mus</taxon>
        <taxon>Mus</taxon>
    </lineage>
</organism>
<name>SVIP_MOUSE</name>
<reference key="1">
    <citation type="journal article" date="2005" name="Science">
        <title>The transcriptional landscape of the mammalian genome.</title>
        <authorList>
            <person name="Carninci P."/>
            <person name="Kasukawa T."/>
            <person name="Katayama S."/>
            <person name="Gough J."/>
            <person name="Frith M.C."/>
            <person name="Maeda N."/>
            <person name="Oyama R."/>
            <person name="Ravasi T."/>
            <person name="Lenhard B."/>
            <person name="Wells C."/>
            <person name="Kodzius R."/>
            <person name="Shimokawa K."/>
            <person name="Bajic V.B."/>
            <person name="Brenner S.E."/>
            <person name="Batalov S."/>
            <person name="Forrest A.R."/>
            <person name="Zavolan M."/>
            <person name="Davis M.J."/>
            <person name="Wilming L.G."/>
            <person name="Aidinis V."/>
            <person name="Allen J.E."/>
            <person name="Ambesi-Impiombato A."/>
            <person name="Apweiler R."/>
            <person name="Aturaliya R.N."/>
            <person name="Bailey T.L."/>
            <person name="Bansal M."/>
            <person name="Baxter L."/>
            <person name="Beisel K.W."/>
            <person name="Bersano T."/>
            <person name="Bono H."/>
            <person name="Chalk A.M."/>
            <person name="Chiu K.P."/>
            <person name="Choudhary V."/>
            <person name="Christoffels A."/>
            <person name="Clutterbuck D.R."/>
            <person name="Crowe M.L."/>
            <person name="Dalla E."/>
            <person name="Dalrymple B.P."/>
            <person name="de Bono B."/>
            <person name="Della Gatta G."/>
            <person name="di Bernardo D."/>
            <person name="Down T."/>
            <person name="Engstrom P."/>
            <person name="Fagiolini M."/>
            <person name="Faulkner G."/>
            <person name="Fletcher C.F."/>
            <person name="Fukushima T."/>
            <person name="Furuno M."/>
            <person name="Futaki S."/>
            <person name="Gariboldi M."/>
            <person name="Georgii-Hemming P."/>
            <person name="Gingeras T.R."/>
            <person name="Gojobori T."/>
            <person name="Green R.E."/>
            <person name="Gustincich S."/>
            <person name="Harbers M."/>
            <person name="Hayashi Y."/>
            <person name="Hensch T.K."/>
            <person name="Hirokawa N."/>
            <person name="Hill D."/>
            <person name="Huminiecki L."/>
            <person name="Iacono M."/>
            <person name="Ikeo K."/>
            <person name="Iwama A."/>
            <person name="Ishikawa T."/>
            <person name="Jakt M."/>
            <person name="Kanapin A."/>
            <person name="Katoh M."/>
            <person name="Kawasawa Y."/>
            <person name="Kelso J."/>
            <person name="Kitamura H."/>
            <person name="Kitano H."/>
            <person name="Kollias G."/>
            <person name="Krishnan S.P."/>
            <person name="Kruger A."/>
            <person name="Kummerfeld S.K."/>
            <person name="Kurochkin I.V."/>
            <person name="Lareau L.F."/>
            <person name="Lazarevic D."/>
            <person name="Lipovich L."/>
            <person name="Liu J."/>
            <person name="Liuni S."/>
            <person name="McWilliam S."/>
            <person name="Madan Babu M."/>
            <person name="Madera M."/>
            <person name="Marchionni L."/>
            <person name="Matsuda H."/>
            <person name="Matsuzawa S."/>
            <person name="Miki H."/>
            <person name="Mignone F."/>
            <person name="Miyake S."/>
            <person name="Morris K."/>
            <person name="Mottagui-Tabar S."/>
            <person name="Mulder N."/>
            <person name="Nakano N."/>
            <person name="Nakauchi H."/>
            <person name="Ng P."/>
            <person name="Nilsson R."/>
            <person name="Nishiguchi S."/>
            <person name="Nishikawa S."/>
            <person name="Nori F."/>
            <person name="Ohara O."/>
            <person name="Okazaki Y."/>
            <person name="Orlando V."/>
            <person name="Pang K.C."/>
            <person name="Pavan W.J."/>
            <person name="Pavesi G."/>
            <person name="Pesole G."/>
            <person name="Petrovsky N."/>
            <person name="Piazza S."/>
            <person name="Reed J."/>
            <person name="Reid J.F."/>
            <person name="Ring B.Z."/>
            <person name="Ringwald M."/>
            <person name="Rost B."/>
            <person name="Ruan Y."/>
            <person name="Salzberg S.L."/>
            <person name="Sandelin A."/>
            <person name="Schneider C."/>
            <person name="Schoenbach C."/>
            <person name="Sekiguchi K."/>
            <person name="Semple C.A."/>
            <person name="Seno S."/>
            <person name="Sessa L."/>
            <person name="Sheng Y."/>
            <person name="Shibata Y."/>
            <person name="Shimada H."/>
            <person name="Shimada K."/>
            <person name="Silva D."/>
            <person name="Sinclair B."/>
            <person name="Sperling S."/>
            <person name="Stupka E."/>
            <person name="Sugiura K."/>
            <person name="Sultana R."/>
            <person name="Takenaka Y."/>
            <person name="Taki K."/>
            <person name="Tammoja K."/>
            <person name="Tan S.L."/>
            <person name="Tang S."/>
            <person name="Taylor M.S."/>
            <person name="Tegner J."/>
            <person name="Teichmann S.A."/>
            <person name="Ueda H.R."/>
            <person name="van Nimwegen E."/>
            <person name="Verardo R."/>
            <person name="Wei C.L."/>
            <person name="Yagi K."/>
            <person name="Yamanishi H."/>
            <person name="Zabarovsky E."/>
            <person name="Zhu S."/>
            <person name="Zimmer A."/>
            <person name="Hide W."/>
            <person name="Bult C."/>
            <person name="Grimmond S.M."/>
            <person name="Teasdale R.D."/>
            <person name="Liu E.T."/>
            <person name="Brusic V."/>
            <person name="Quackenbush J."/>
            <person name="Wahlestedt C."/>
            <person name="Mattick J.S."/>
            <person name="Hume D.A."/>
            <person name="Kai C."/>
            <person name="Sasaki D."/>
            <person name="Tomaru Y."/>
            <person name="Fukuda S."/>
            <person name="Kanamori-Katayama M."/>
            <person name="Suzuki M."/>
            <person name="Aoki J."/>
            <person name="Arakawa T."/>
            <person name="Iida J."/>
            <person name="Imamura K."/>
            <person name="Itoh M."/>
            <person name="Kato T."/>
            <person name="Kawaji H."/>
            <person name="Kawagashira N."/>
            <person name="Kawashima T."/>
            <person name="Kojima M."/>
            <person name="Kondo S."/>
            <person name="Konno H."/>
            <person name="Nakano K."/>
            <person name="Ninomiya N."/>
            <person name="Nishio T."/>
            <person name="Okada M."/>
            <person name="Plessy C."/>
            <person name="Shibata K."/>
            <person name="Shiraki T."/>
            <person name="Suzuki S."/>
            <person name="Tagami M."/>
            <person name="Waki K."/>
            <person name="Watahiki A."/>
            <person name="Okamura-Oho Y."/>
            <person name="Suzuki H."/>
            <person name="Kawai J."/>
            <person name="Hayashizaki Y."/>
        </authorList>
    </citation>
    <scope>NUCLEOTIDE SEQUENCE [LARGE SCALE MRNA]</scope>
    <source>
        <strain>C57BL/6J</strain>
    </source>
</reference>
<reference key="2">
    <citation type="journal article" date="2022" name="Sci. Rep.">
        <title>Novel regulation mechanism of adrenal cortisol and DHEA biosynthesis via the endogen ERAD inhibitor small VCP-interacting protein.</title>
        <authorList>
            <person name="Ilhan R."/>
            <person name="Uener G."/>
            <person name="Yilmaz S."/>
            <person name="Atalay Sahar E."/>
            <person name="Cayli S."/>
            <person name="Erzurumlu Y."/>
            <person name="Gozen O."/>
            <person name="Ballar Kirmizibayrak P."/>
        </authorList>
    </citation>
    <scope>TISSUE SPECIFICITY</scope>
</reference>
<proteinExistence type="evidence at transcript level"/>
<protein>
    <recommendedName>
        <fullName>Small VCP/p97-interacting protein</fullName>
    </recommendedName>
</protein>
<evidence type="ECO:0000250" key="1">
    <source>
        <dbReference type="UniProtKB" id="P0C0A9"/>
    </source>
</evidence>
<evidence type="ECO:0000250" key="2">
    <source>
        <dbReference type="UniProtKB" id="Q8NHG7"/>
    </source>
</evidence>
<evidence type="ECO:0000256" key="3">
    <source>
        <dbReference type="SAM" id="MobiDB-lite"/>
    </source>
</evidence>
<evidence type="ECO:0000269" key="4">
    <source>
    </source>
</evidence>
<evidence type="ECO:0000305" key="5"/>